<gene>
    <name type="primary">rnmt</name>
    <name type="ORF">TGas135f12.1</name>
</gene>
<accession>Q28FT4</accession>
<sequence length="405" mass="46714">MDNILNPEDNVSQTNTETDVTDGPFQYVKEEHSSHKFTASGQNLDSPPKNKKSPLKRKAGEPESPSKRPRLEEGHGSLVVTHYNELPETGLETRSQSRIFHLRNFNNWMKSALIGEFVEKVRQRTRNIAVLDLGCGKGGDLLKWRKGGISKLVCTDIADVSVKQCEERYKDLKRKSRNERVFEAEFLTADSTKELLSEKYNDPEIKFDICSCQFVYHYSFETYEQADMMLRNACERLCPGGFFIGTTPDGFELVKRLEASDTNSFGNDVYTVKFEKKGKYPLFGCKYDFSLEEVVNVPEFLVYFPVLVEMAKKYQMKLIYKKTFREFFEEKVKNDEQKMLLKRMKALEPYPAAPNFKLVSGRTEDYEHAQKLVENGQVKLPLGTLSKSEWEATSIYLLFAFEKQA</sequence>
<protein>
    <recommendedName>
        <fullName>mRNA cap guanine-N(7) methyltransferase</fullName>
        <ecNumber evidence="1">2.1.1.56</ecNumber>
    </recommendedName>
    <alternativeName>
        <fullName>RG7MT1</fullName>
    </alternativeName>
    <alternativeName>
        <fullName>mRNA (guanine-N(7))-methyltransferase</fullName>
    </alternativeName>
    <alternativeName>
        <fullName>mRNA cap methyltransferase</fullName>
    </alternativeName>
</protein>
<proteinExistence type="evidence at transcript level"/>
<comment type="function">
    <text evidence="1">Catalytic subunit of the mRNA-capping methyltransferase RNMT:RAMAC complex that methylates the N7 position of the added guanosine to the 5'-cap structure of mRNAs. Binds RNA containing 5'-terminal GpppC.</text>
</comment>
<comment type="catalytic activity">
    <reaction evidence="1 2">
        <text>a 5'-end (5'-triphosphoguanosine)-ribonucleoside in mRNA + S-adenosyl-L-methionine = a 5'-end (N(7)-methyl 5'-triphosphoguanosine)-ribonucleoside in mRNA + S-adenosyl-L-homocysteine</text>
        <dbReference type="Rhea" id="RHEA:67008"/>
        <dbReference type="Rhea" id="RHEA-COMP:17166"/>
        <dbReference type="Rhea" id="RHEA-COMP:17167"/>
        <dbReference type="ChEBI" id="CHEBI:57856"/>
        <dbReference type="ChEBI" id="CHEBI:59789"/>
        <dbReference type="ChEBI" id="CHEBI:156461"/>
        <dbReference type="ChEBI" id="CHEBI:167617"/>
        <dbReference type="EC" id="2.1.1.56"/>
    </reaction>
</comment>
<comment type="subcellular location">
    <subcellularLocation>
        <location evidence="1">Nucleus</location>
    </subcellularLocation>
</comment>
<comment type="similarity">
    <text evidence="2">Belongs to the class I-like SAM-binding methyltransferase superfamily. mRNA cap 0 methyltransferase family.</text>
</comment>
<evidence type="ECO:0000250" key="1">
    <source>
        <dbReference type="UniProtKB" id="O43148"/>
    </source>
</evidence>
<evidence type="ECO:0000255" key="2">
    <source>
        <dbReference type="PROSITE-ProRule" id="PRU00895"/>
    </source>
</evidence>
<evidence type="ECO:0000256" key="3">
    <source>
        <dbReference type="SAM" id="MobiDB-lite"/>
    </source>
</evidence>
<feature type="chain" id="PRO_0000248327" description="mRNA cap guanine-N(7) methyltransferase">
    <location>
        <begin position="1"/>
        <end position="405"/>
    </location>
</feature>
<feature type="domain" description="mRNA cap 0 methyltransferase" evidence="2">
    <location>
        <begin position="97"/>
        <end position="404"/>
    </location>
</feature>
<feature type="region of interest" description="Disordered" evidence="3">
    <location>
        <begin position="1"/>
        <end position="78"/>
    </location>
</feature>
<feature type="compositionally biased region" description="Polar residues" evidence="3">
    <location>
        <begin position="9"/>
        <end position="18"/>
    </location>
</feature>
<feature type="compositionally biased region" description="Polar residues" evidence="3">
    <location>
        <begin position="36"/>
        <end position="45"/>
    </location>
</feature>
<feature type="compositionally biased region" description="Basic and acidic residues" evidence="3">
    <location>
        <begin position="58"/>
        <end position="75"/>
    </location>
</feature>
<feature type="binding site" evidence="2">
    <location>
        <begin position="106"/>
        <end position="107"/>
    </location>
    <ligand>
        <name>mRNA</name>
        <dbReference type="ChEBI" id="CHEBI:33699"/>
    </ligand>
    <ligandPart>
        <name>mRNA cap</name>
    </ligandPart>
</feature>
<feature type="binding site" evidence="2">
    <location>
        <position position="110"/>
    </location>
    <ligand>
        <name>S-adenosyl-L-methionine</name>
        <dbReference type="ChEBI" id="CHEBI:59789"/>
    </ligand>
</feature>
<feature type="binding site" evidence="2">
    <location>
        <position position="134"/>
    </location>
    <ligand>
        <name>S-adenosyl-L-methionine</name>
        <dbReference type="ChEBI" id="CHEBI:59789"/>
    </ligand>
</feature>
<feature type="binding site" evidence="2">
    <location>
        <position position="156"/>
    </location>
    <ligand>
        <name>S-adenosyl-L-methionine</name>
        <dbReference type="ChEBI" id="CHEBI:59789"/>
    </ligand>
</feature>
<feature type="binding site" evidence="1">
    <location>
        <position position="190"/>
    </location>
    <ligand>
        <name>S-adenosyl-L-methionine</name>
        <dbReference type="ChEBI" id="CHEBI:59789"/>
    </ligand>
</feature>
<feature type="binding site" evidence="1">
    <location>
        <position position="213"/>
    </location>
    <ligand>
        <name>S-adenosyl-L-methionine</name>
        <dbReference type="ChEBI" id="CHEBI:59789"/>
    </ligand>
</feature>
<feature type="binding site" evidence="1">
    <location>
        <position position="218"/>
    </location>
    <ligand>
        <name>S-adenosyl-L-methionine</name>
        <dbReference type="ChEBI" id="CHEBI:59789"/>
    </ligand>
</feature>
<feature type="site" description="mRNA cap binding" evidence="2">
    <location>
        <position position="137"/>
    </location>
</feature>
<feature type="site" description="mRNA cap binding" evidence="2">
    <location>
        <position position="143"/>
    </location>
</feature>
<feature type="site" description="mRNA cap binding" evidence="2">
    <location>
        <position position="168"/>
    </location>
</feature>
<feature type="site" description="mRNA cap binding" evidence="2">
    <location>
        <position position="217"/>
    </location>
</feature>
<feature type="site" description="mRNA cap binding" evidence="2">
    <location>
        <position position="299"/>
    </location>
</feature>
<feature type="site" description="mRNA cap binding" evidence="2">
    <location>
        <position position="396"/>
    </location>
</feature>
<keyword id="KW-0489">Methyltransferase</keyword>
<keyword id="KW-0506">mRNA capping</keyword>
<keyword id="KW-0507">mRNA processing</keyword>
<keyword id="KW-0539">Nucleus</keyword>
<keyword id="KW-1185">Reference proteome</keyword>
<keyword id="KW-0694">RNA-binding</keyword>
<keyword id="KW-0949">S-adenosyl-L-methionine</keyword>
<keyword id="KW-0808">Transferase</keyword>
<name>MCES_XENTR</name>
<organism>
    <name type="scientific">Xenopus tropicalis</name>
    <name type="common">Western clawed frog</name>
    <name type="synonym">Silurana tropicalis</name>
    <dbReference type="NCBI Taxonomy" id="8364"/>
    <lineage>
        <taxon>Eukaryota</taxon>
        <taxon>Metazoa</taxon>
        <taxon>Chordata</taxon>
        <taxon>Craniata</taxon>
        <taxon>Vertebrata</taxon>
        <taxon>Euteleostomi</taxon>
        <taxon>Amphibia</taxon>
        <taxon>Batrachia</taxon>
        <taxon>Anura</taxon>
        <taxon>Pipoidea</taxon>
        <taxon>Pipidae</taxon>
        <taxon>Xenopodinae</taxon>
        <taxon>Xenopus</taxon>
        <taxon>Silurana</taxon>
    </lineage>
</organism>
<dbReference type="EC" id="2.1.1.56" evidence="1"/>
<dbReference type="EMBL" id="CR761774">
    <property type="protein sequence ID" value="CAJ83499.1"/>
    <property type="molecule type" value="mRNA"/>
</dbReference>
<dbReference type="RefSeq" id="NP_001017053.1">
    <property type="nucleotide sequence ID" value="NM_001017053.2"/>
</dbReference>
<dbReference type="RefSeq" id="XP_012820220.1">
    <property type="nucleotide sequence ID" value="XM_012964766.1"/>
</dbReference>
<dbReference type="SMR" id="Q28FT4"/>
<dbReference type="FunCoup" id="Q28FT4">
    <property type="interactions" value="3575"/>
</dbReference>
<dbReference type="STRING" id="8364.ENSXETP00000018462"/>
<dbReference type="PaxDb" id="8364-ENSXETP00000059893"/>
<dbReference type="GeneID" id="549807"/>
<dbReference type="KEGG" id="xtr:549807"/>
<dbReference type="AGR" id="Xenbase:XB-GENE-944369"/>
<dbReference type="CTD" id="8731"/>
<dbReference type="Xenbase" id="XB-GENE-944369">
    <property type="gene designation" value="rnmt"/>
</dbReference>
<dbReference type="eggNOG" id="KOG1975">
    <property type="taxonomic scope" value="Eukaryota"/>
</dbReference>
<dbReference type="InParanoid" id="Q28FT4"/>
<dbReference type="OMA" id="LITGDCF"/>
<dbReference type="OrthoDB" id="10248867at2759"/>
<dbReference type="Reactome" id="R-XTR-72086">
    <property type="pathway name" value="mRNA Capping"/>
</dbReference>
<dbReference type="Proteomes" id="UP000008143">
    <property type="component" value="Chromosome 6"/>
</dbReference>
<dbReference type="Bgee" id="ENSXETG00000014707">
    <property type="expression patterns" value="Expressed in ovary and 14 other cell types or tissues"/>
</dbReference>
<dbReference type="GO" id="GO:0160130">
    <property type="term" value="C:mRNA cap methyltransferase RNMT:RAMAC complex"/>
    <property type="evidence" value="ECO:0000250"/>
    <property type="project" value="UniProtKB"/>
</dbReference>
<dbReference type="GO" id="GO:0005634">
    <property type="term" value="C:nucleus"/>
    <property type="evidence" value="ECO:0000250"/>
    <property type="project" value="UniProtKB"/>
</dbReference>
<dbReference type="GO" id="GO:0004482">
    <property type="term" value="F:mRNA 5'-cap (guanine-N7-)-methyltransferase activity"/>
    <property type="evidence" value="ECO:0000250"/>
    <property type="project" value="UniProtKB"/>
</dbReference>
<dbReference type="GO" id="GO:0003723">
    <property type="term" value="F:RNA binding"/>
    <property type="evidence" value="ECO:0000250"/>
    <property type="project" value="UniProtKB"/>
</dbReference>
<dbReference type="GO" id="GO:0006370">
    <property type="term" value="P:7-methylguanosine mRNA capping"/>
    <property type="evidence" value="ECO:0000250"/>
    <property type="project" value="UniProtKB"/>
</dbReference>
<dbReference type="CDD" id="cd02440">
    <property type="entry name" value="AdoMet_MTases"/>
    <property type="match status" value="1"/>
</dbReference>
<dbReference type="Gene3D" id="3.40.50.150">
    <property type="entry name" value="Vaccinia Virus protein VP39"/>
    <property type="match status" value="1"/>
</dbReference>
<dbReference type="InterPro" id="IPR004971">
    <property type="entry name" value="mRNA_G-N7_MeTrfase_dom"/>
</dbReference>
<dbReference type="InterPro" id="IPR016899">
    <property type="entry name" value="mRNA_G-N7_MeTrfase_euk"/>
</dbReference>
<dbReference type="InterPro" id="IPR039753">
    <property type="entry name" value="RG7MT1"/>
</dbReference>
<dbReference type="InterPro" id="IPR029063">
    <property type="entry name" value="SAM-dependent_MTases_sf"/>
</dbReference>
<dbReference type="PANTHER" id="PTHR12189:SF2">
    <property type="entry name" value="MRNA CAP GUANINE-N7 METHYLTRANSFERASE"/>
    <property type="match status" value="1"/>
</dbReference>
<dbReference type="PANTHER" id="PTHR12189">
    <property type="entry name" value="MRNA GUANINE-7- METHYLTRANSFERASE"/>
    <property type="match status" value="1"/>
</dbReference>
<dbReference type="Pfam" id="PF03291">
    <property type="entry name" value="mRNA_G-N7_MeTrfase"/>
    <property type="match status" value="1"/>
</dbReference>
<dbReference type="PIRSF" id="PIRSF028762">
    <property type="entry name" value="ABD1"/>
    <property type="match status" value="1"/>
</dbReference>
<dbReference type="SUPFAM" id="SSF53335">
    <property type="entry name" value="S-adenosyl-L-methionine-dependent methyltransferases"/>
    <property type="match status" value="1"/>
</dbReference>
<dbReference type="PROSITE" id="PS51562">
    <property type="entry name" value="RNA_CAP0_MT"/>
    <property type="match status" value="1"/>
</dbReference>
<reference key="1">
    <citation type="submission" date="2006-06" db="EMBL/GenBank/DDBJ databases">
        <authorList>
            <consortium name="Sanger Xenopus tropicalis EST/cDNA project"/>
        </authorList>
    </citation>
    <scope>NUCLEOTIDE SEQUENCE [LARGE SCALE MRNA]</scope>
    <source>
        <tissue>Gastrula</tissue>
    </source>
</reference>